<reference key="1">
    <citation type="submission" date="2007-03" db="EMBL/GenBank/DDBJ databases">
        <authorList>
            <consortium name="NIH - Xenopus Gene Collection (XGC) project"/>
        </authorList>
    </citation>
    <scope>NUCLEOTIDE SEQUENCE [LARGE SCALE MRNA]</scope>
    <source>
        <tissue>Embryo</tissue>
    </source>
</reference>
<dbReference type="EC" id="3.1.3.16" evidence="1"/>
<dbReference type="EC" id="3.1.3.48" evidence="1"/>
<dbReference type="EMBL" id="BC135695">
    <property type="protein sequence ID" value="AAI35696.1"/>
    <property type="status" value="ALT_INIT"/>
    <property type="molecule type" value="mRNA"/>
</dbReference>
<dbReference type="RefSeq" id="NP_001153481.1">
    <property type="nucleotide sequence ID" value="NM_001160009.1"/>
</dbReference>
<dbReference type="SMR" id="A4IHU7"/>
<dbReference type="FunCoup" id="A4IHU7">
    <property type="interactions" value="81"/>
</dbReference>
<dbReference type="STRING" id="8364.ENSXETP00000051196"/>
<dbReference type="PaxDb" id="8364-ENSXETP00000044495"/>
<dbReference type="GeneID" id="100124898"/>
<dbReference type="KEGG" id="xtr:100124898"/>
<dbReference type="AGR" id="Xenbase:XB-GENE-5944519"/>
<dbReference type="CTD" id="338599"/>
<dbReference type="Xenbase" id="XB-GENE-5944519">
    <property type="gene designation" value="dusp29"/>
</dbReference>
<dbReference type="eggNOG" id="KOG1716">
    <property type="taxonomic scope" value="Eukaryota"/>
</dbReference>
<dbReference type="InParanoid" id="A4IHU7"/>
<dbReference type="OrthoDB" id="10252009at2759"/>
<dbReference type="Proteomes" id="UP000008143">
    <property type="component" value="Chromosome 7"/>
</dbReference>
<dbReference type="GO" id="GO:0005737">
    <property type="term" value="C:cytoplasm"/>
    <property type="evidence" value="ECO:0000250"/>
    <property type="project" value="UniProtKB"/>
</dbReference>
<dbReference type="GO" id="GO:0005634">
    <property type="term" value="C:nucleus"/>
    <property type="evidence" value="ECO:0000250"/>
    <property type="project" value="UniProtKB"/>
</dbReference>
<dbReference type="GO" id="GO:0004722">
    <property type="term" value="F:protein serine/threonine phosphatase activity"/>
    <property type="evidence" value="ECO:0007669"/>
    <property type="project" value="UniProtKB-EC"/>
</dbReference>
<dbReference type="GO" id="GO:0004725">
    <property type="term" value="F:protein tyrosine phosphatase activity"/>
    <property type="evidence" value="ECO:0007669"/>
    <property type="project" value="UniProtKB-EC"/>
</dbReference>
<dbReference type="GO" id="GO:0008138">
    <property type="term" value="F:protein tyrosine/serine/threonine phosphatase activity"/>
    <property type="evidence" value="ECO:0000250"/>
    <property type="project" value="UniProtKB"/>
</dbReference>
<dbReference type="GO" id="GO:0006470">
    <property type="term" value="P:protein dephosphorylation"/>
    <property type="evidence" value="ECO:0000250"/>
    <property type="project" value="UniProtKB"/>
</dbReference>
<dbReference type="CDD" id="cd14575">
    <property type="entry name" value="DUPD1"/>
    <property type="match status" value="1"/>
</dbReference>
<dbReference type="FunFam" id="3.90.190.10:FF:000037">
    <property type="entry name" value="dual specificity protein phosphatase 26"/>
    <property type="match status" value="1"/>
</dbReference>
<dbReference type="Gene3D" id="3.90.190.10">
    <property type="entry name" value="Protein tyrosine phosphatase superfamily"/>
    <property type="match status" value="1"/>
</dbReference>
<dbReference type="InterPro" id="IPR020405">
    <property type="entry name" value="Atypical_DUSP_subfamA"/>
</dbReference>
<dbReference type="InterPro" id="IPR000340">
    <property type="entry name" value="Dual-sp_phosphatase_cat-dom"/>
</dbReference>
<dbReference type="InterPro" id="IPR029021">
    <property type="entry name" value="Prot-tyrosine_phosphatase-like"/>
</dbReference>
<dbReference type="InterPro" id="IPR000387">
    <property type="entry name" value="Tyr_Pase_dom"/>
</dbReference>
<dbReference type="InterPro" id="IPR020422">
    <property type="entry name" value="TYR_PHOSPHATASE_DUAL_dom"/>
</dbReference>
<dbReference type="PANTHER" id="PTHR45682">
    <property type="entry name" value="AGAP008228-PA"/>
    <property type="match status" value="1"/>
</dbReference>
<dbReference type="PANTHER" id="PTHR45682:SF6">
    <property type="entry name" value="DUAL SPECIFICITY PHOSPHATASE 29"/>
    <property type="match status" value="1"/>
</dbReference>
<dbReference type="Pfam" id="PF00782">
    <property type="entry name" value="DSPc"/>
    <property type="match status" value="1"/>
</dbReference>
<dbReference type="PRINTS" id="PR01908">
    <property type="entry name" value="ADSPHPHTASE"/>
</dbReference>
<dbReference type="PRINTS" id="PR01909">
    <property type="entry name" value="ADSPHPHTASEA"/>
</dbReference>
<dbReference type="SMART" id="SM00195">
    <property type="entry name" value="DSPc"/>
    <property type="match status" value="1"/>
</dbReference>
<dbReference type="SUPFAM" id="SSF52799">
    <property type="entry name" value="(Phosphotyrosine protein) phosphatases II"/>
    <property type="match status" value="1"/>
</dbReference>
<dbReference type="PROSITE" id="PS50056">
    <property type="entry name" value="TYR_PHOSPHATASE_2"/>
    <property type="match status" value="1"/>
</dbReference>
<dbReference type="PROSITE" id="PS50054">
    <property type="entry name" value="TYR_PHOSPHATASE_DUAL"/>
    <property type="match status" value="1"/>
</dbReference>
<feature type="chain" id="PRO_0000295892" description="Dual specificity phosphatase 29">
    <location>
        <begin position="1"/>
        <end position="209"/>
    </location>
</feature>
<feature type="domain" description="Tyrosine-protein phosphatase" evidence="3">
    <location>
        <begin position="44"/>
        <end position="193"/>
    </location>
</feature>
<feature type="active site" description="Phosphocysteine intermediate" evidence="3">
    <location>
        <position position="138"/>
    </location>
</feature>
<feature type="binding site" evidence="1">
    <location>
        <begin position="137"/>
        <end position="144"/>
    </location>
    <ligand>
        <name>substrate</name>
    </ligand>
</feature>
<evidence type="ECO:0000250" key="1">
    <source>
        <dbReference type="UniProtKB" id="Q68J44"/>
    </source>
</evidence>
<evidence type="ECO:0000250" key="2">
    <source>
        <dbReference type="UniProtKB" id="Q8BK84"/>
    </source>
</evidence>
<evidence type="ECO:0000255" key="3">
    <source>
        <dbReference type="PROSITE-ProRule" id="PRU00160"/>
    </source>
</evidence>
<evidence type="ECO:0000305" key="4"/>
<comment type="function">
    <text evidence="1 2">Dual specificity phosphatase able to dephosphorylate phosphotyrosine, phosphoserine and phosphothreonine residues within the same substrate, with a preference for phosphotyrosine as a substrate (By similarity). Involved in the modulation of AMPK and MAPK1/2 signaling pathways (By similarity).</text>
</comment>
<comment type="catalytic activity">
    <reaction evidence="1">
        <text>O-phospho-L-tyrosyl-[protein] + H2O = L-tyrosyl-[protein] + phosphate</text>
        <dbReference type="Rhea" id="RHEA:10684"/>
        <dbReference type="Rhea" id="RHEA-COMP:10136"/>
        <dbReference type="Rhea" id="RHEA-COMP:20101"/>
        <dbReference type="ChEBI" id="CHEBI:15377"/>
        <dbReference type="ChEBI" id="CHEBI:43474"/>
        <dbReference type="ChEBI" id="CHEBI:46858"/>
        <dbReference type="ChEBI" id="CHEBI:61978"/>
        <dbReference type="EC" id="3.1.3.48"/>
    </reaction>
</comment>
<comment type="catalytic activity">
    <reaction evidence="1">
        <text>O-phospho-L-seryl-[protein] + H2O = L-seryl-[protein] + phosphate</text>
        <dbReference type="Rhea" id="RHEA:20629"/>
        <dbReference type="Rhea" id="RHEA-COMP:9863"/>
        <dbReference type="Rhea" id="RHEA-COMP:11604"/>
        <dbReference type="ChEBI" id="CHEBI:15377"/>
        <dbReference type="ChEBI" id="CHEBI:29999"/>
        <dbReference type="ChEBI" id="CHEBI:43474"/>
        <dbReference type="ChEBI" id="CHEBI:83421"/>
        <dbReference type="EC" id="3.1.3.16"/>
    </reaction>
</comment>
<comment type="catalytic activity">
    <reaction evidence="1">
        <text>O-phospho-L-threonyl-[protein] + H2O = L-threonyl-[protein] + phosphate</text>
        <dbReference type="Rhea" id="RHEA:47004"/>
        <dbReference type="Rhea" id="RHEA-COMP:11060"/>
        <dbReference type="Rhea" id="RHEA-COMP:11605"/>
        <dbReference type="ChEBI" id="CHEBI:15377"/>
        <dbReference type="ChEBI" id="CHEBI:30013"/>
        <dbReference type="ChEBI" id="CHEBI:43474"/>
        <dbReference type="ChEBI" id="CHEBI:61977"/>
        <dbReference type="EC" id="3.1.3.16"/>
    </reaction>
</comment>
<comment type="subcellular location">
    <subcellularLocation>
        <location evidence="1">Cytoplasm</location>
    </subcellularLocation>
    <subcellularLocation>
        <location evidence="2">Nucleus</location>
    </subcellularLocation>
</comment>
<comment type="similarity">
    <text evidence="4">Belongs to the protein-tyrosine phosphatase family. Non-receptor class dual specificity subfamily.</text>
</comment>
<comment type="sequence caution" evidence="4">
    <conflict type="erroneous initiation">
        <sequence resource="EMBL-CDS" id="AAI35696"/>
    </conflict>
    <text>Extended N-terminus.</text>
</comment>
<name>DUS29_XENTR</name>
<sequence length="209" mass="23746">MPADTPIRKKPNAYASVVDPDTGYCTPGAFELERLFWHGAPKYNHVNEVWPNLYIGDEKTALDRYSLEKNGFTHILNAAHGRWNVDTGPEYYSDITVEYYGVEAEDLPSFNLSQFFYPAAQFIRNALSSPSSKVLVNCAMGRSRSASLVLAYLMIYENMTVVDSIMQVLKHRCILPNRGFLKQLRELDIQLALERRGTEDTAKKAQKDD</sequence>
<accession>A4IHU7</accession>
<keyword id="KW-0963">Cytoplasm</keyword>
<keyword id="KW-0378">Hydrolase</keyword>
<keyword id="KW-0539">Nucleus</keyword>
<keyword id="KW-0904">Protein phosphatase</keyword>
<keyword id="KW-1185">Reference proteome</keyword>
<gene>
    <name type="primary">dusp29</name>
    <name type="synonym">dupd1</name>
</gene>
<protein>
    <recommendedName>
        <fullName>Dual specificity phosphatase 29</fullName>
    </recommendedName>
    <alternativeName>
        <fullName>Dual specificity phosphatase DUPD1</fullName>
        <ecNumber evidence="1">3.1.3.16</ecNumber>
        <ecNumber evidence="1">3.1.3.48</ecNumber>
    </alternativeName>
</protein>
<proteinExistence type="evidence at transcript level"/>
<organism>
    <name type="scientific">Xenopus tropicalis</name>
    <name type="common">Western clawed frog</name>
    <name type="synonym">Silurana tropicalis</name>
    <dbReference type="NCBI Taxonomy" id="8364"/>
    <lineage>
        <taxon>Eukaryota</taxon>
        <taxon>Metazoa</taxon>
        <taxon>Chordata</taxon>
        <taxon>Craniata</taxon>
        <taxon>Vertebrata</taxon>
        <taxon>Euteleostomi</taxon>
        <taxon>Amphibia</taxon>
        <taxon>Batrachia</taxon>
        <taxon>Anura</taxon>
        <taxon>Pipoidea</taxon>
        <taxon>Pipidae</taxon>
        <taxon>Xenopodinae</taxon>
        <taxon>Xenopus</taxon>
        <taxon>Silurana</taxon>
    </lineage>
</organism>